<protein>
    <recommendedName>
        <fullName evidence="1">NADH-quinone oxidoreductase subunit H</fullName>
        <ecNumber evidence="1">7.1.1.-</ecNumber>
    </recommendedName>
    <alternativeName>
        <fullName evidence="1">NADH dehydrogenase I subunit H</fullName>
    </alternativeName>
    <alternativeName>
        <fullName evidence="1">NDH-1 subunit H</fullName>
    </alternativeName>
</protein>
<keyword id="KW-0997">Cell inner membrane</keyword>
<keyword id="KW-1003">Cell membrane</keyword>
<keyword id="KW-0472">Membrane</keyword>
<keyword id="KW-0520">NAD</keyword>
<keyword id="KW-0874">Quinone</keyword>
<keyword id="KW-1185">Reference proteome</keyword>
<keyword id="KW-1278">Translocase</keyword>
<keyword id="KW-0812">Transmembrane</keyword>
<keyword id="KW-1133">Transmembrane helix</keyword>
<keyword id="KW-0830">Ubiquinone</keyword>
<evidence type="ECO:0000255" key="1">
    <source>
        <dbReference type="HAMAP-Rule" id="MF_01350"/>
    </source>
</evidence>
<proteinExistence type="inferred from homology"/>
<comment type="function">
    <text evidence="1">NDH-1 shuttles electrons from NADH, via FMN and iron-sulfur (Fe-S) centers, to quinones in the respiratory chain. The immediate electron acceptor for the enzyme in this species is believed to be ubiquinone. Couples the redox reaction to proton translocation (for every two electrons transferred, four hydrogen ions are translocated across the cytoplasmic membrane), and thus conserves the redox energy in a proton gradient. This subunit may bind ubiquinone.</text>
</comment>
<comment type="catalytic activity">
    <reaction evidence="1">
        <text>a quinone + NADH + 5 H(+)(in) = a quinol + NAD(+) + 4 H(+)(out)</text>
        <dbReference type="Rhea" id="RHEA:57888"/>
        <dbReference type="ChEBI" id="CHEBI:15378"/>
        <dbReference type="ChEBI" id="CHEBI:24646"/>
        <dbReference type="ChEBI" id="CHEBI:57540"/>
        <dbReference type="ChEBI" id="CHEBI:57945"/>
        <dbReference type="ChEBI" id="CHEBI:132124"/>
    </reaction>
</comment>
<comment type="subunit">
    <text evidence="1">NDH-1 is composed of 14 different subunits. Subunits NuoA, H, J, K, L, M, N constitute the membrane sector of the complex.</text>
</comment>
<comment type="subcellular location">
    <subcellularLocation>
        <location evidence="1">Cell inner membrane</location>
        <topology evidence="1">Multi-pass membrane protein</topology>
    </subcellularLocation>
</comment>
<comment type="similarity">
    <text evidence="1">Belongs to the complex I subunit 1 family.</text>
</comment>
<gene>
    <name evidence="1" type="primary">nuoH</name>
    <name type="ordered locus">Tbd_1149</name>
</gene>
<accession>Q3SJQ0</accession>
<organism>
    <name type="scientific">Thiobacillus denitrificans (strain ATCC 25259 / T1)</name>
    <dbReference type="NCBI Taxonomy" id="292415"/>
    <lineage>
        <taxon>Bacteria</taxon>
        <taxon>Pseudomonadati</taxon>
        <taxon>Pseudomonadota</taxon>
        <taxon>Betaproteobacteria</taxon>
        <taxon>Nitrosomonadales</taxon>
        <taxon>Thiobacillaceae</taxon>
        <taxon>Thiobacillus</taxon>
    </lineage>
</organism>
<feature type="chain" id="PRO_0000240114" description="NADH-quinone oxidoreductase subunit H">
    <location>
        <begin position="1"/>
        <end position="343"/>
    </location>
</feature>
<feature type="transmembrane region" description="Helical" evidence="1">
    <location>
        <begin position="19"/>
        <end position="39"/>
    </location>
</feature>
<feature type="transmembrane region" description="Helical" evidence="1">
    <location>
        <begin position="89"/>
        <end position="109"/>
    </location>
</feature>
<feature type="transmembrane region" description="Helical" evidence="1">
    <location>
        <begin position="124"/>
        <end position="144"/>
    </location>
</feature>
<feature type="transmembrane region" description="Helical" evidence="1">
    <location>
        <begin position="158"/>
        <end position="178"/>
    </location>
</feature>
<feature type="transmembrane region" description="Helical" evidence="1">
    <location>
        <begin position="198"/>
        <end position="218"/>
    </location>
</feature>
<feature type="transmembrane region" description="Helical" evidence="1">
    <location>
        <begin position="257"/>
        <end position="277"/>
    </location>
</feature>
<feature type="transmembrane region" description="Helical" evidence="1">
    <location>
        <begin position="279"/>
        <end position="299"/>
    </location>
</feature>
<feature type="transmembrane region" description="Helical" evidence="1">
    <location>
        <begin position="314"/>
        <end position="334"/>
    </location>
</feature>
<name>NUOH_THIDA</name>
<sequence>MEAGIVEAAGMDWEAFQTVAWTLVKIMALVVPLMLGVAYLTYAERKIIGWMQVRIGPNRVGFQGLLQPIADAVKLLMKEIIIPSGASRALFILGPILAIAPALAAWAVIPFSDGLVLADINAGLLYVMAITSMGVYGVIIAGWASNSKYAFLGAMRSAAQIVSYEIAMGFALVGVLMASQSLNLSAIVQGQAGGIQQWYLWPLFPLFVVYLVAGVAETNRAPFDVAEGESEIVAGFHVEYSGMAFAVFFLAEYANMILVAALTTLMFLGGWLSPVAFLPDGIVWWLLKTGFVLFLFLWFRATFPRYRYDQIMRLGWKVFIPITIVWIVFVGGMMQTPYGHLFH</sequence>
<dbReference type="EC" id="7.1.1.-" evidence="1"/>
<dbReference type="EMBL" id="CP000116">
    <property type="protein sequence ID" value="AAZ97102.1"/>
    <property type="molecule type" value="Genomic_DNA"/>
</dbReference>
<dbReference type="RefSeq" id="WP_011311661.1">
    <property type="nucleotide sequence ID" value="NC_007404.1"/>
</dbReference>
<dbReference type="SMR" id="Q3SJQ0"/>
<dbReference type="STRING" id="292415.Tbd_1149"/>
<dbReference type="KEGG" id="tbd:Tbd_1149"/>
<dbReference type="eggNOG" id="COG1005">
    <property type="taxonomic scope" value="Bacteria"/>
</dbReference>
<dbReference type="HOGENOM" id="CLU_015134_0_1_4"/>
<dbReference type="Proteomes" id="UP000008291">
    <property type="component" value="Chromosome"/>
</dbReference>
<dbReference type="GO" id="GO:0005886">
    <property type="term" value="C:plasma membrane"/>
    <property type="evidence" value="ECO:0007669"/>
    <property type="project" value="UniProtKB-SubCell"/>
</dbReference>
<dbReference type="GO" id="GO:0003954">
    <property type="term" value="F:NADH dehydrogenase activity"/>
    <property type="evidence" value="ECO:0007669"/>
    <property type="project" value="TreeGrafter"/>
</dbReference>
<dbReference type="GO" id="GO:0016655">
    <property type="term" value="F:oxidoreductase activity, acting on NAD(P)H, quinone or similar compound as acceptor"/>
    <property type="evidence" value="ECO:0007669"/>
    <property type="project" value="UniProtKB-UniRule"/>
</dbReference>
<dbReference type="GO" id="GO:0048038">
    <property type="term" value="F:quinone binding"/>
    <property type="evidence" value="ECO:0007669"/>
    <property type="project" value="UniProtKB-KW"/>
</dbReference>
<dbReference type="GO" id="GO:0009060">
    <property type="term" value="P:aerobic respiration"/>
    <property type="evidence" value="ECO:0007669"/>
    <property type="project" value="TreeGrafter"/>
</dbReference>
<dbReference type="HAMAP" id="MF_01350">
    <property type="entry name" value="NDH1_NuoH"/>
    <property type="match status" value="1"/>
</dbReference>
<dbReference type="InterPro" id="IPR001694">
    <property type="entry name" value="NADH_UbQ_OxRdtase_su1/FPO"/>
</dbReference>
<dbReference type="InterPro" id="IPR018086">
    <property type="entry name" value="NADH_UbQ_OxRdtase_su1_CS"/>
</dbReference>
<dbReference type="NCBIfam" id="NF004741">
    <property type="entry name" value="PRK06076.1-2"/>
    <property type="match status" value="1"/>
</dbReference>
<dbReference type="PANTHER" id="PTHR11432">
    <property type="entry name" value="NADH DEHYDROGENASE SUBUNIT 1"/>
    <property type="match status" value="1"/>
</dbReference>
<dbReference type="PANTHER" id="PTHR11432:SF3">
    <property type="entry name" value="NADH-UBIQUINONE OXIDOREDUCTASE CHAIN 1"/>
    <property type="match status" value="1"/>
</dbReference>
<dbReference type="Pfam" id="PF00146">
    <property type="entry name" value="NADHdh"/>
    <property type="match status" value="1"/>
</dbReference>
<dbReference type="PROSITE" id="PS00667">
    <property type="entry name" value="COMPLEX1_ND1_1"/>
    <property type="match status" value="1"/>
</dbReference>
<dbReference type="PROSITE" id="PS00668">
    <property type="entry name" value="COMPLEX1_ND1_2"/>
    <property type="match status" value="1"/>
</dbReference>
<reference key="1">
    <citation type="journal article" date="2006" name="J. Bacteriol.">
        <title>The genome sequence of the obligately chemolithoautotrophic, facultatively anaerobic bacterium Thiobacillus denitrificans.</title>
        <authorList>
            <person name="Beller H.R."/>
            <person name="Chain P.S."/>
            <person name="Letain T.E."/>
            <person name="Chakicherla A."/>
            <person name="Larimer F.W."/>
            <person name="Richardson P.M."/>
            <person name="Coleman M.A."/>
            <person name="Wood A.P."/>
            <person name="Kelly D.P."/>
        </authorList>
    </citation>
    <scope>NUCLEOTIDE SEQUENCE [LARGE SCALE GENOMIC DNA]</scope>
    <source>
        <strain>ATCC 25259 / T1</strain>
    </source>
</reference>